<sequence length="226" mass="24684">METVVIVAIGVLATIFLASFAALVVVCRQRYCRPRDLLQRYDSKPIVDLIGAMETQSEPSELELDDVVITNPHIEAILENEDWIEDASGLMSHCIAILKICHTLTEKLVAMTMGSGAKMKTSASVSDIIVVAKRISPRVDDVVKSMYPPLDPKLLDARTTALLLSVSHLVLVTRNACHLTGGLDWIDQSLSAAEEHLEVLREAALASEPDKSLPNPEGFLQEQSAI</sequence>
<proteinExistence type="evidence at protein level"/>
<feature type="chain" id="PRO_0000251712" description="Transmembrane protein 98">
    <location>
        <begin position="1"/>
        <end position="226"/>
    </location>
</feature>
<feature type="topological domain" description="Cytoplasmic" evidence="1">
    <location>
        <begin position="1"/>
        <end position="3"/>
    </location>
</feature>
<feature type="transmembrane region" description="Helical" evidence="2">
    <location>
        <begin position="4"/>
        <end position="24"/>
    </location>
</feature>
<feature type="topological domain" description="Extracellular" evidence="1">
    <location>
        <begin position="25"/>
        <end position="226"/>
    </location>
</feature>
<feature type="region of interest" description="Required for interaction with MYRF" evidence="5">
    <location>
        <begin position="1"/>
        <end position="88"/>
    </location>
</feature>
<feature type="region of interest" description="Disordered" evidence="3">
    <location>
        <begin position="207"/>
        <end position="226"/>
    </location>
</feature>
<name>TMM98_MOUSE</name>
<gene>
    <name type="primary">Tmem98</name>
</gene>
<keyword id="KW-1003">Cell membrane</keyword>
<keyword id="KW-0256">Endoplasmic reticulum</keyword>
<keyword id="KW-0472">Membrane</keyword>
<keyword id="KW-1185">Reference proteome</keyword>
<keyword id="KW-0964">Secreted</keyword>
<keyword id="KW-0812">Transmembrane</keyword>
<keyword id="KW-1133">Transmembrane helix</keyword>
<comment type="function">
    <text evidence="4">Functions as a negative regulator of MYRF in oligodendrocyte differentiation and myelination. Interacts with the C-terminal of MYRF inhibiting MYRF self-cleavage and N-fragment nuclear translocation (PubMed:25946230). The secreted form promotes differentiation of T helper 1 cells (Th1) (PubMed:25946230).</text>
</comment>
<comment type="subunit">
    <text evidence="5">Interacts (via N-terminal region) with MYRF; the interaction inhibits MYRF self-cleavage.</text>
</comment>
<comment type="subcellular location">
    <subcellularLocation>
        <location evidence="7">Endoplasmic reticulum membrane</location>
        <topology evidence="1">Single-pass type II membrane protein</topology>
    </subcellularLocation>
    <subcellularLocation>
        <location evidence="1">Cell membrane</location>
        <topology evidence="1">Single-pass type II membrane protein</topology>
    </subcellularLocation>
    <subcellularLocation>
        <location evidence="4">Secreted</location>
    </subcellularLocation>
    <subcellularLocation>
        <location evidence="1">Secreted</location>
        <location evidence="1">Extracellular exosome</location>
    </subcellularLocation>
    <text evidence="1">Secreted by exosomes through a non-classical pathway.</text>
</comment>
<comment type="tissue specificity">
    <text evidence="4 5">Expressed in differentiated oligodendrocytes in early postanatal central nervous system tissues (PubMed:30249802). Expressed by CD4(+) T cells, the expression increases upon activation (at protein level) (PubMed:25946230).</text>
</comment>
<comment type="developmental stage">
    <text evidence="5">In the spinal cord region, expression is initially detected in the ventral white matter at 18.5 dpc, up-regulates rapidly afterward, and peaks at early postnatal stages from P4 to P7. At P15, expression starts to be detected in the gray matter of spinal cord but gradually disappears thereafter. Also observed in corpus callosum and the white matter of cerebellum at P15 stages.</text>
</comment>
<comment type="similarity">
    <text evidence="6">Belongs to the TMEM98 family.</text>
</comment>
<organism>
    <name type="scientific">Mus musculus</name>
    <name type="common">Mouse</name>
    <dbReference type="NCBI Taxonomy" id="10090"/>
    <lineage>
        <taxon>Eukaryota</taxon>
        <taxon>Metazoa</taxon>
        <taxon>Chordata</taxon>
        <taxon>Craniata</taxon>
        <taxon>Vertebrata</taxon>
        <taxon>Euteleostomi</taxon>
        <taxon>Mammalia</taxon>
        <taxon>Eutheria</taxon>
        <taxon>Euarchontoglires</taxon>
        <taxon>Glires</taxon>
        <taxon>Rodentia</taxon>
        <taxon>Myomorpha</taxon>
        <taxon>Muroidea</taxon>
        <taxon>Muridae</taxon>
        <taxon>Murinae</taxon>
        <taxon>Mus</taxon>
        <taxon>Mus</taxon>
    </lineage>
</organism>
<protein>
    <recommendedName>
        <fullName>Transmembrane protein 98</fullName>
    </recommendedName>
</protein>
<evidence type="ECO:0000250" key="1">
    <source>
        <dbReference type="UniProtKB" id="Q9Y2Y6"/>
    </source>
</evidence>
<evidence type="ECO:0000255" key="2"/>
<evidence type="ECO:0000256" key="3">
    <source>
        <dbReference type="SAM" id="MobiDB-lite"/>
    </source>
</evidence>
<evidence type="ECO:0000269" key="4">
    <source>
    </source>
</evidence>
<evidence type="ECO:0000269" key="5">
    <source>
    </source>
</evidence>
<evidence type="ECO:0000305" key="6"/>
<evidence type="ECO:0000305" key="7">
    <source>
    </source>
</evidence>
<accession>Q91X86</accession>
<dbReference type="EMBL" id="AK153960">
    <property type="protein sequence ID" value="BAE32282.1"/>
    <property type="molecule type" value="mRNA"/>
</dbReference>
<dbReference type="EMBL" id="AL663054">
    <property type="status" value="NOT_ANNOTATED_CDS"/>
    <property type="molecule type" value="Genomic_DNA"/>
</dbReference>
<dbReference type="EMBL" id="BC011208">
    <property type="protein sequence ID" value="AAH11208.1"/>
    <property type="molecule type" value="mRNA"/>
</dbReference>
<dbReference type="CCDS" id="CCDS25135.1"/>
<dbReference type="RefSeq" id="NP_083813.1">
    <property type="nucleotide sequence ID" value="NM_029537.2"/>
</dbReference>
<dbReference type="SMR" id="Q91X86"/>
<dbReference type="BioGRID" id="222153">
    <property type="interactions" value="1"/>
</dbReference>
<dbReference type="FunCoup" id="Q91X86">
    <property type="interactions" value="113"/>
</dbReference>
<dbReference type="STRING" id="10090.ENSMUSP00000042825"/>
<dbReference type="iPTMnet" id="Q91X86"/>
<dbReference type="PhosphoSitePlus" id="Q91X86"/>
<dbReference type="SwissPalm" id="Q91X86"/>
<dbReference type="PaxDb" id="10090-ENSMUSP00000042825"/>
<dbReference type="PeptideAtlas" id="Q91X86"/>
<dbReference type="ProteomicsDB" id="259265"/>
<dbReference type="Pumba" id="Q91X86"/>
<dbReference type="Antibodypedia" id="52106">
    <property type="antibodies" value="42 antibodies from 12 providers"/>
</dbReference>
<dbReference type="Ensembl" id="ENSMUST00000040865.9">
    <property type="protein sequence ID" value="ENSMUSP00000042825.9"/>
    <property type="gene ID" value="ENSMUSG00000035413.9"/>
</dbReference>
<dbReference type="GeneID" id="103743"/>
<dbReference type="KEGG" id="mmu:103743"/>
<dbReference type="UCSC" id="uc007kmj.1">
    <property type="organism name" value="mouse"/>
</dbReference>
<dbReference type="AGR" id="MGI:1923457"/>
<dbReference type="CTD" id="26022"/>
<dbReference type="MGI" id="MGI:1923457">
    <property type="gene designation" value="Tmem98"/>
</dbReference>
<dbReference type="VEuPathDB" id="HostDB:ENSMUSG00000035413"/>
<dbReference type="eggNOG" id="ENOG502QT8U">
    <property type="taxonomic scope" value="Eukaryota"/>
</dbReference>
<dbReference type="GeneTree" id="ENSGT00390000012062"/>
<dbReference type="HOGENOM" id="CLU_084317_0_0_1"/>
<dbReference type="InParanoid" id="Q91X86"/>
<dbReference type="OMA" id="HMEVIRE"/>
<dbReference type="OrthoDB" id="5978425at2759"/>
<dbReference type="PhylomeDB" id="Q91X86"/>
<dbReference type="TreeFam" id="TF336444"/>
<dbReference type="BioGRID-ORCS" id="103743">
    <property type="hits" value="0 hits in 77 CRISPR screens"/>
</dbReference>
<dbReference type="ChiTaRS" id="Tmem98">
    <property type="organism name" value="mouse"/>
</dbReference>
<dbReference type="PRO" id="PR:Q91X86"/>
<dbReference type="Proteomes" id="UP000000589">
    <property type="component" value="Chromosome 11"/>
</dbReference>
<dbReference type="RNAct" id="Q91X86">
    <property type="molecule type" value="protein"/>
</dbReference>
<dbReference type="Bgee" id="ENSMUSG00000035413">
    <property type="expression patterns" value="Expressed in pigmented layer of retina and 233 other cell types or tissues"/>
</dbReference>
<dbReference type="GO" id="GO:0005789">
    <property type="term" value="C:endoplasmic reticulum membrane"/>
    <property type="evidence" value="ECO:0000314"/>
    <property type="project" value="UniProtKB"/>
</dbReference>
<dbReference type="GO" id="GO:0070062">
    <property type="term" value="C:extracellular exosome"/>
    <property type="evidence" value="ECO:0000250"/>
    <property type="project" value="UniProtKB"/>
</dbReference>
<dbReference type="GO" id="GO:0005615">
    <property type="term" value="C:extracellular space"/>
    <property type="evidence" value="ECO:0000314"/>
    <property type="project" value="UniProtKB"/>
</dbReference>
<dbReference type="GO" id="GO:0005794">
    <property type="term" value="C:Golgi apparatus"/>
    <property type="evidence" value="ECO:0000250"/>
    <property type="project" value="MGI"/>
</dbReference>
<dbReference type="GO" id="GO:0005886">
    <property type="term" value="C:plasma membrane"/>
    <property type="evidence" value="ECO:0000250"/>
    <property type="project" value="UniProtKB"/>
</dbReference>
<dbReference type="GO" id="GO:0060070">
    <property type="term" value="P:canonical Wnt signaling pathway"/>
    <property type="evidence" value="ECO:0000250"/>
    <property type="project" value="MGI"/>
</dbReference>
<dbReference type="GO" id="GO:0010467">
    <property type="term" value="P:gene expression"/>
    <property type="evidence" value="ECO:0000250"/>
    <property type="project" value="MGI"/>
</dbReference>
<dbReference type="GO" id="GO:0031642">
    <property type="term" value="P:negative regulation of myelination"/>
    <property type="evidence" value="ECO:0000315"/>
    <property type="project" value="UniProtKB"/>
</dbReference>
<dbReference type="GO" id="GO:0048715">
    <property type="term" value="P:negative regulation of oligodendrocyte differentiation"/>
    <property type="evidence" value="ECO:0000315"/>
    <property type="project" value="UniProtKB"/>
</dbReference>
<dbReference type="GO" id="GO:1900181">
    <property type="term" value="P:negative regulation of protein localization to nucleus"/>
    <property type="evidence" value="ECO:0000314"/>
    <property type="project" value="UniProtKB"/>
</dbReference>
<dbReference type="GO" id="GO:0010955">
    <property type="term" value="P:negative regulation of protein processing"/>
    <property type="evidence" value="ECO:0000314"/>
    <property type="project" value="UniProtKB"/>
</dbReference>
<dbReference type="GO" id="GO:0045063">
    <property type="term" value="P:T-helper 1 cell differentiation"/>
    <property type="evidence" value="ECO:0000314"/>
    <property type="project" value="UniProtKB"/>
</dbReference>
<dbReference type="FunFam" id="1.20.1410.10:FF:000003">
    <property type="entry name" value="Transmembrane protein 98"/>
    <property type="match status" value="1"/>
</dbReference>
<dbReference type="Gene3D" id="1.20.1410.10">
    <property type="entry name" value="I/LWEQ domain"/>
    <property type="match status" value="1"/>
</dbReference>
<dbReference type="InterPro" id="IPR029668">
    <property type="entry name" value="TMEM98"/>
</dbReference>
<dbReference type="PANTHER" id="PTHR32510">
    <property type="entry name" value="TRANSMEMBRANE PROTEIN 98"/>
    <property type="match status" value="1"/>
</dbReference>
<dbReference type="PANTHER" id="PTHR32510:SF3">
    <property type="entry name" value="TRANSMEMBRANE PROTEIN 98"/>
    <property type="match status" value="1"/>
</dbReference>
<reference key="1">
    <citation type="journal article" date="2005" name="Science">
        <title>The transcriptional landscape of the mammalian genome.</title>
        <authorList>
            <person name="Carninci P."/>
            <person name="Kasukawa T."/>
            <person name="Katayama S."/>
            <person name="Gough J."/>
            <person name="Frith M.C."/>
            <person name="Maeda N."/>
            <person name="Oyama R."/>
            <person name="Ravasi T."/>
            <person name="Lenhard B."/>
            <person name="Wells C."/>
            <person name="Kodzius R."/>
            <person name="Shimokawa K."/>
            <person name="Bajic V.B."/>
            <person name="Brenner S.E."/>
            <person name="Batalov S."/>
            <person name="Forrest A.R."/>
            <person name="Zavolan M."/>
            <person name="Davis M.J."/>
            <person name="Wilming L.G."/>
            <person name="Aidinis V."/>
            <person name="Allen J.E."/>
            <person name="Ambesi-Impiombato A."/>
            <person name="Apweiler R."/>
            <person name="Aturaliya R.N."/>
            <person name="Bailey T.L."/>
            <person name="Bansal M."/>
            <person name="Baxter L."/>
            <person name="Beisel K.W."/>
            <person name="Bersano T."/>
            <person name="Bono H."/>
            <person name="Chalk A.M."/>
            <person name="Chiu K.P."/>
            <person name="Choudhary V."/>
            <person name="Christoffels A."/>
            <person name="Clutterbuck D.R."/>
            <person name="Crowe M.L."/>
            <person name="Dalla E."/>
            <person name="Dalrymple B.P."/>
            <person name="de Bono B."/>
            <person name="Della Gatta G."/>
            <person name="di Bernardo D."/>
            <person name="Down T."/>
            <person name="Engstrom P."/>
            <person name="Fagiolini M."/>
            <person name="Faulkner G."/>
            <person name="Fletcher C.F."/>
            <person name="Fukushima T."/>
            <person name="Furuno M."/>
            <person name="Futaki S."/>
            <person name="Gariboldi M."/>
            <person name="Georgii-Hemming P."/>
            <person name="Gingeras T.R."/>
            <person name="Gojobori T."/>
            <person name="Green R.E."/>
            <person name="Gustincich S."/>
            <person name="Harbers M."/>
            <person name="Hayashi Y."/>
            <person name="Hensch T.K."/>
            <person name="Hirokawa N."/>
            <person name="Hill D."/>
            <person name="Huminiecki L."/>
            <person name="Iacono M."/>
            <person name="Ikeo K."/>
            <person name="Iwama A."/>
            <person name="Ishikawa T."/>
            <person name="Jakt M."/>
            <person name="Kanapin A."/>
            <person name="Katoh M."/>
            <person name="Kawasawa Y."/>
            <person name="Kelso J."/>
            <person name="Kitamura H."/>
            <person name="Kitano H."/>
            <person name="Kollias G."/>
            <person name="Krishnan S.P."/>
            <person name="Kruger A."/>
            <person name="Kummerfeld S.K."/>
            <person name="Kurochkin I.V."/>
            <person name="Lareau L.F."/>
            <person name="Lazarevic D."/>
            <person name="Lipovich L."/>
            <person name="Liu J."/>
            <person name="Liuni S."/>
            <person name="McWilliam S."/>
            <person name="Madan Babu M."/>
            <person name="Madera M."/>
            <person name="Marchionni L."/>
            <person name="Matsuda H."/>
            <person name="Matsuzawa S."/>
            <person name="Miki H."/>
            <person name="Mignone F."/>
            <person name="Miyake S."/>
            <person name="Morris K."/>
            <person name="Mottagui-Tabar S."/>
            <person name="Mulder N."/>
            <person name="Nakano N."/>
            <person name="Nakauchi H."/>
            <person name="Ng P."/>
            <person name="Nilsson R."/>
            <person name="Nishiguchi S."/>
            <person name="Nishikawa S."/>
            <person name="Nori F."/>
            <person name="Ohara O."/>
            <person name="Okazaki Y."/>
            <person name="Orlando V."/>
            <person name="Pang K.C."/>
            <person name="Pavan W.J."/>
            <person name="Pavesi G."/>
            <person name="Pesole G."/>
            <person name="Petrovsky N."/>
            <person name="Piazza S."/>
            <person name="Reed J."/>
            <person name="Reid J.F."/>
            <person name="Ring B.Z."/>
            <person name="Ringwald M."/>
            <person name="Rost B."/>
            <person name="Ruan Y."/>
            <person name="Salzberg S.L."/>
            <person name="Sandelin A."/>
            <person name="Schneider C."/>
            <person name="Schoenbach C."/>
            <person name="Sekiguchi K."/>
            <person name="Semple C.A."/>
            <person name="Seno S."/>
            <person name="Sessa L."/>
            <person name="Sheng Y."/>
            <person name="Shibata Y."/>
            <person name="Shimada H."/>
            <person name="Shimada K."/>
            <person name="Silva D."/>
            <person name="Sinclair B."/>
            <person name="Sperling S."/>
            <person name="Stupka E."/>
            <person name="Sugiura K."/>
            <person name="Sultana R."/>
            <person name="Takenaka Y."/>
            <person name="Taki K."/>
            <person name="Tammoja K."/>
            <person name="Tan S.L."/>
            <person name="Tang S."/>
            <person name="Taylor M.S."/>
            <person name="Tegner J."/>
            <person name="Teichmann S.A."/>
            <person name="Ueda H.R."/>
            <person name="van Nimwegen E."/>
            <person name="Verardo R."/>
            <person name="Wei C.L."/>
            <person name="Yagi K."/>
            <person name="Yamanishi H."/>
            <person name="Zabarovsky E."/>
            <person name="Zhu S."/>
            <person name="Zimmer A."/>
            <person name="Hide W."/>
            <person name="Bult C."/>
            <person name="Grimmond S.M."/>
            <person name="Teasdale R.D."/>
            <person name="Liu E.T."/>
            <person name="Brusic V."/>
            <person name="Quackenbush J."/>
            <person name="Wahlestedt C."/>
            <person name="Mattick J.S."/>
            <person name="Hume D.A."/>
            <person name="Kai C."/>
            <person name="Sasaki D."/>
            <person name="Tomaru Y."/>
            <person name="Fukuda S."/>
            <person name="Kanamori-Katayama M."/>
            <person name="Suzuki M."/>
            <person name="Aoki J."/>
            <person name="Arakawa T."/>
            <person name="Iida J."/>
            <person name="Imamura K."/>
            <person name="Itoh M."/>
            <person name="Kato T."/>
            <person name="Kawaji H."/>
            <person name="Kawagashira N."/>
            <person name="Kawashima T."/>
            <person name="Kojima M."/>
            <person name="Kondo S."/>
            <person name="Konno H."/>
            <person name="Nakano K."/>
            <person name="Ninomiya N."/>
            <person name="Nishio T."/>
            <person name="Okada M."/>
            <person name="Plessy C."/>
            <person name="Shibata K."/>
            <person name="Shiraki T."/>
            <person name="Suzuki S."/>
            <person name="Tagami M."/>
            <person name="Waki K."/>
            <person name="Watahiki A."/>
            <person name="Okamura-Oho Y."/>
            <person name="Suzuki H."/>
            <person name="Kawai J."/>
            <person name="Hayashizaki Y."/>
        </authorList>
    </citation>
    <scope>NUCLEOTIDE SEQUENCE [LARGE SCALE MRNA]</scope>
    <source>
        <strain>NOD</strain>
        <tissue>Thymus</tissue>
    </source>
</reference>
<reference key="2">
    <citation type="journal article" date="2009" name="PLoS Biol.">
        <title>Lineage-specific biology revealed by a finished genome assembly of the mouse.</title>
        <authorList>
            <person name="Church D.M."/>
            <person name="Goodstadt L."/>
            <person name="Hillier L.W."/>
            <person name="Zody M.C."/>
            <person name="Goldstein S."/>
            <person name="She X."/>
            <person name="Bult C.J."/>
            <person name="Agarwala R."/>
            <person name="Cherry J.L."/>
            <person name="DiCuccio M."/>
            <person name="Hlavina W."/>
            <person name="Kapustin Y."/>
            <person name="Meric P."/>
            <person name="Maglott D."/>
            <person name="Birtle Z."/>
            <person name="Marques A.C."/>
            <person name="Graves T."/>
            <person name="Zhou S."/>
            <person name="Teague B."/>
            <person name="Potamousis K."/>
            <person name="Churas C."/>
            <person name="Place M."/>
            <person name="Herschleb J."/>
            <person name="Runnheim R."/>
            <person name="Forrest D."/>
            <person name="Amos-Landgraf J."/>
            <person name="Schwartz D.C."/>
            <person name="Cheng Z."/>
            <person name="Lindblad-Toh K."/>
            <person name="Eichler E.E."/>
            <person name="Ponting C.P."/>
        </authorList>
    </citation>
    <scope>NUCLEOTIDE SEQUENCE [LARGE SCALE GENOMIC DNA]</scope>
    <source>
        <strain>C57BL/6J</strain>
    </source>
</reference>
<reference key="3">
    <citation type="journal article" date="2004" name="Genome Res.">
        <title>The status, quality, and expansion of the NIH full-length cDNA project: the Mammalian Gene Collection (MGC).</title>
        <authorList>
            <consortium name="The MGC Project Team"/>
        </authorList>
    </citation>
    <scope>NUCLEOTIDE SEQUENCE [LARGE SCALE MRNA]</scope>
    <source>
        <strain>FVB/N</strain>
        <tissue>Liver</tissue>
    </source>
</reference>
<reference key="4">
    <citation type="journal article" date="2015" name="J. Interferon Cytokine Res.">
        <title>The Secreted Form of Transmembrane Protein 98 Promotes the Differentiation of T Helper 1 Cells.</title>
        <authorList>
            <person name="Fu W."/>
            <person name="Cheng Y."/>
            <person name="Zhang Y."/>
            <person name="Mo X."/>
            <person name="Li T."/>
            <person name="Liu Y."/>
            <person name="Wang P."/>
            <person name="Pan W."/>
            <person name="Chen Y."/>
            <person name="Xue Y."/>
            <person name="Ma D."/>
            <person name="Zhang Y."/>
            <person name="Han W."/>
        </authorList>
    </citation>
    <scope>FUNCTION</scope>
    <scope>TISSUE SPECIFICITY</scope>
    <scope>SUBCELLULAR LOCATION</scope>
</reference>
<reference key="5">
    <citation type="journal article" date="2018" name="J. Neurosci.">
        <title>Interactive Repression of MYRF Self-Cleavage and Activity in Oligodendrocyte Differentiation by TMEM98 Protein.</title>
        <authorList>
            <person name="Huang H."/>
            <person name="Teng P."/>
            <person name="Du J."/>
            <person name="Meng J."/>
            <person name="Hu X."/>
            <person name="Tang T."/>
            <person name="Zhang Z."/>
            <person name="Qi Y.B."/>
            <person name="Qiu M."/>
        </authorList>
    </citation>
    <scope>FUNCTION</scope>
    <scope>TISSUE SPECIFICITY</scope>
    <scope>DEVELOPMENTAL STAGE</scope>
    <scope>SUBCELLULAR LOCATION</scope>
    <scope>INTERACTION WITH MYRF</scope>
</reference>